<reference key="1">
    <citation type="journal article" date="2008" name="Mol. Immunol.">
        <title>Bovine TLR2 and TLR4 properly transduce signals from Staphylococcus aureus and E. coli, but S. aureus fails to both activate NF-kappaB in mammary epithelial cells and to quickly induce TNFalpha and interleukin-8 (CXCL8) expression in the udder.</title>
        <authorList>
            <person name="Yang W."/>
            <person name="Zerbe H."/>
            <person name="Petzl W."/>
            <person name="Brunner R.M."/>
            <person name="Gunther J."/>
            <person name="Draing C."/>
            <person name="von Aulock S."/>
            <person name="Schuberth H.J."/>
            <person name="Seyfert H.M."/>
        </authorList>
    </citation>
    <scope>NUCLEOTIDE SEQUENCE [MRNA] (ISOFORM 1)</scope>
    <scope>FUNCTION</scope>
    <source>
        <tissue>Mammary gland</tissue>
    </source>
</reference>
<reference key="2">
    <citation type="submission" date="2005-02" db="EMBL/GenBank/DDBJ databases">
        <title>Regulation of TLR-mediated NFkB activation by alternative splicing of bovine MyD88.</title>
        <authorList>
            <person name="Bailey R."/>
            <person name="Yamakawa Y."/>
            <person name="Stalker A."/>
            <person name="Willcocks S."/>
            <person name="Werling D."/>
        </authorList>
    </citation>
    <scope>NUCLEOTIDE SEQUENCE [MRNA] (ISOFORMS 2 AND 3)</scope>
</reference>
<reference key="3">
    <citation type="submission" date="2005-08" db="EMBL/GenBank/DDBJ databases">
        <authorList>
            <consortium name="NIH - Mammalian Gene Collection (MGC) project"/>
        </authorList>
    </citation>
    <scope>NUCLEOTIDE SEQUENCE [LARGE SCALE MRNA] (ISOFORM 1)</scope>
    <source>
        <strain>Crossbred X Angus</strain>
        <tissue>Ileum</tissue>
    </source>
</reference>
<reference key="4">
    <citation type="journal article" date="2006" name="Vet. Immunol. Immunopathol.">
        <title>Expression of TOLL-like receptors (TLR) by bovine antigen-presenting cells-potential role in pathogen discrimination?</title>
        <authorList>
            <person name="Werling D."/>
            <person name="Piercy J."/>
            <person name="Coffey T.J."/>
        </authorList>
    </citation>
    <scope>NUCLEOTIDE SEQUENCE [MRNA] OF 206-296 (ISOFORMS 1/2)</scope>
</reference>
<reference key="5">
    <citation type="journal article" date="2009" name="Comp. Immunol. Microbiol. Infect. Dis.">
        <title>Functional characterization of bovine TIRAP and MyD88 in mediating bacterial lipopolysaccharide-induced endothelial NF-kappaB activation and apoptosis.</title>
        <authorList>
            <person name="Cates E.A."/>
            <person name="Connor E.E."/>
            <person name="Mosser D.M."/>
            <person name="Bannerman D.D."/>
        </authorList>
    </citation>
    <scope>FUNCTION</scope>
</reference>
<keyword id="KW-0025">Alternative splicing</keyword>
<keyword id="KW-0963">Cytoplasm</keyword>
<keyword id="KW-0391">Immunity</keyword>
<keyword id="KW-0395">Inflammatory response</keyword>
<keyword id="KW-0399">Innate immunity</keyword>
<keyword id="KW-0539">Nucleus</keyword>
<keyword id="KW-0597">Phosphoprotein</keyword>
<keyword id="KW-1185">Reference proteome</keyword>
<keyword id="KW-0832">Ubl conjugation</keyword>
<sequence>MAEGVPRAGSALPAASLSSLPLAALNVRVRRRLSLFLNVRAPVAADWTVLAEAMDFEYLEIQQLEKYADPTSRLLDDWQRRPGASVGRLLELLAKLGRDDVLMELGPSIEEDCQKYILKQQQEASEKPLQVDSIDSSITRINDMAGITIRDDPLGQKPECFDAFICYCPSDIEFVHEMIRQLEQTNYRLKLCVSDRDVLPGTCVWSIASELIEKRCRRMVVVVSDEYLQSKECDFQTKFALSLSPGAHQKRLIPIKYKPMKKEFPSILRFITVCDYTNPCTQNWFWTRLAKALSMP</sequence>
<feature type="chain" id="PRO_0000393129" description="Myeloid differentiation primary response protein MyD88">
    <location>
        <begin position="1"/>
        <end position="296"/>
    </location>
</feature>
<feature type="domain" description="Death" evidence="4">
    <location>
        <begin position="32"/>
        <end position="109"/>
    </location>
</feature>
<feature type="domain" description="TIR" evidence="5">
    <location>
        <begin position="159"/>
        <end position="293"/>
    </location>
</feature>
<feature type="region of interest" description="Intermediate domain" evidence="1">
    <location>
        <begin position="110"/>
        <end position="155"/>
    </location>
</feature>
<feature type="modified residue" description="Phosphoserine" evidence="3">
    <location>
        <position position="244"/>
    </location>
</feature>
<feature type="splice variant" id="VSP_038889" description="In isoform 2 and isoform 3." evidence="8">
    <location>
        <begin position="111"/>
        <end position="155"/>
    </location>
</feature>
<feature type="splice variant" id="VSP_038890" description="In isoform 3." evidence="8">
    <original>CRRMVVVVSDEYLQSKECDFQTKFALSLSPGAHQKRLIPIKYKPMKKEF</original>
    <variation>LATWPQGKWVGVQSPARDPHAGVLPAGPCLAWHSGILPRLSPGGSPRCL</variation>
    <location>
        <begin position="216"/>
        <end position="264"/>
    </location>
</feature>
<feature type="splice variant" id="VSP_038891" description="In isoform 3." evidence="8">
    <location>
        <begin position="265"/>
        <end position="296"/>
    </location>
</feature>
<proteinExistence type="evidence at transcript level"/>
<accession>Q599T9</accession>
<accession>Q49BZ6</accession>
<accession>Q49CF6</accession>
<accession>Q6GV22</accession>
<organism>
    <name type="scientific">Bos taurus</name>
    <name type="common">Bovine</name>
    <dbReference type="NCBI Taxonomy" id="9913"/>
    <lineage>
        <taxon>Eukaryota</taxon>
        <taxon>Metazoa</taxon>
        <taxon>Chordata</taxon>
        <taxon>Craniata</taxon>
        <taxon>Vertebrata</taxon>
        <taxon>Euteleostomi</taxon>
        <taxon>Mammalia</taxon>
        <taxon>Eutheria</taxon>
        <taxon>Laurasiatheria</taxon>
        <taxon>Artiodactyla</taxon>
        <taxon>Ruminantia</taxon>
        <taxon>Pecora</taxon>
        <taxon>Bovidae</taxon>
        <taxon>Bovinae</taxon>
        <taxon>Bos</taxon>
    </lineage>
</organism>
<dbReference type="EMBL" id="AJ853453">
    <property type="protein sequence ID" value="CAH68521.1"/>
    <property type="molecule type" value="mRNA"/>
</dbReference>
<dbReference type="EMBL" id="AY934808">
    <property type="protein sequence ID" value="AAY16578.1"/>
    <property type="molecule type" value="mRNA"/>
</dbReference>
<dbReference type="EMBL" id="AY937381">
    <property type="protein sequence ID" value="AAY22119.1"/>
    <property type="molecule type" value="mRNA"/>
</dbReference>
<dbReference type="EMBL" id="BC102851">
    <property type="protein sequence ID" value="AAI02852.1"/>
    <property type="molecule type" value="mRNA"/>
</dbReference>
<dbReference type="EMBL" id="AY634627">
    <property type="protein sequence ID" value="AAT48485.1"/>
    <property type="molecule type" value="mRNA"/>
</dbReference>
<dbReference type="RefSeq" id="NP_001014404.1">
    <molecule id="Q599T9-1"/>
    <property type="nucleotide sequence ID" value="NM_001014382.2"/>
</dbReference>
<dbReference type="SMR" id="Q599T9"/>
<dbReference type="FunCoup" id="Q599T9">
    <property type="interactions" value="1606"/>
</dbReference>
<dbReference type="STRING" id="9913.ENSBTAP00000000735"/>
<dbReference type="PaxDb" id="9913-ENSBTAP00000000735"/>
<dbReference type="GeneID" id="444881"/>
<dbReference type="KEGG" id="bta:444881"/>
<dbReference type="CTD" id="4615"/>
<dbReference type="eggNOG" id="ENOG502QWKI">
    <property type="taxonomic scope" value="Eukaryota"/>
</dbReference>
<dbReference type="InParanoid" id="Q599T9"/>
<dbReference type="OrthoDB" id="10037120at2759"/>
<dbReference type="TreeFam" id="TF326264"/>
<dbReference type="Proteomes" id="UP000009136">
    <property type="component" value="Unplaced"/>
</dbReference>
<dbReference type="GO" id="GO:0005737">
    <property type="term" value="C:cytoplasm"/>
    <property type="evidence" value="ECO:0007669"/>
    <property type="project" value="UniProtKB-SubCell"/>
</dbReference>
<dbReference type="GO" id="GO:0005634">
    <property type="term" value="C:nucleus"/>
    <property type="evidence" value="ECO:0007669"/>
    <property type="project" value="UniProtKB-SubCell"/>
</dbReference>
<dbReference type="GO" id="GO:0005886">
    <property type="term" value="C:plasma membrane"/>
    <property type="evidence" value="ECO:0000318"/>
    <property type="project" value="GO_Central"/>
</dbReference>
<dbReference type="GO" id="GO:0070976">
    <property type="term" value="F:TIR domain binding"/>
    <property type="evidence" value="ECO:0007669"/>
    <property type="project" value="InterPro"/>
</dbReference>
<dbReference type="GO" id="GO:0035325">
    <property type="term" value="F:Toll-like receptor binding"/>
    <property type="evidence" value="ECO:0000318"/>
    <property type="project" value="GO_Central"/>
</dbReference>
<dbReference type="GO" id="GO:0050830">
    <property type="term" value="P:defense response to Gram-positive bacterium"/>
    <property type="evidence" value="ECO:0000250"/>
    <property type="project" value="UniProtKB"/>
</dbReference>
<dbReference type="GO" id="GO:0051607">
    <property type="term" value="P:defense response to virus"/>
    <property type="evidence" value="ECO:0000250"/>
    <property type="project" value="UniProtKB"/>
</dbReference>
<dbReference type="GO" id="GO:0006954">
    <property type="term" value="P:inflammatory response"/>
    <property type="evidence" value="ECO:0007669"/>
    <property type="project" value="UniProtKB-KW"/>
</dbReference>
<dbReference type="GO" id="GO:0045087">
    <property type="term" value="P:innate immune response"/>
    <property type="evidence" value="ECO:0000318"/>
    <property type="project" value="GO_Central"/>
</dbReference>
<dbReference type="GO" id="GO:0002755">
    <property type="term" value="P:MyD88-dependent toll-like receptor signaling pathway"/>
    <property type="evidence" value="ECO:0007669"/>
    <property type="project" value="InterPro"/>
</dbReference>
<dbReference type="GO" id="GO:0043123">
    <property type="term" value="P:positive regulation of canonical NF-kappaB signal transduction"/>
    <property type="evidence" value="ECO:0007669"/>
    <property type="project" value="InterPro"/>
</dbReference>
<dbReference type="GO" id="GO:0032731">
    <property type="term" value="P:positive regulation of interleukin-1 beta production"/>
    <property type="evidence" value="ECO:0000250"/>
    <property type="project" value="UniProtKB"/>
</dbReference>
<dbReference type="GO" id="GO:1900227">
    <property type="term" value="P:positive regulation of NLRP3 inflammasome complex assembly"/>
    <property type="evidence" value="ECO:0000250"/>
    <property type="project" value="UniProtKB"/>
</dbReference>
<dbReference type="GO" id="GO:0008063">
    <property type="term" value="P:Toll signaling pathway"/>
    <property type="evidence" value="ECO:0000318"/>
    <property type="project" value="GO_Central"/>
</dbReference>
<dbReference type="GO" id="GO:0034142">
    <property type="term" value="P:toll-like receptor 4 signaling pathway"/>
    <property type="evidence" value="ECO:0000318"/>
    <property type="project" value="GO_Central"/>
</dbReference>
<dbReference type="GO" id="GO:0034158">
    <property type="term" value="P:toll-like receptor 8 signaling pathway"/>
    <property type="evidence" value="ECO:0000250"/>
    <property type="project" value="UniProtKB"/>
</dbReference>
<dbReference type="CDD" id="cd08312">
    <property type="entry name" value="Death_MyD88"/>
    <property type="match status" value="1"/>
</dbReference>
<dbReference type="FunFam" id="1.10.533.10:FF:000029">
    <property type="entry name" value="Myeloid differentiation primary response protein MyD88"/>
    <property type="match status" value="1"/>
</dbReference>
<dbReference type="FunFam" id="3.40.50.10140:FF:000005">
    <property type="entry name" value="Myeloid differentiation primary response protein MyD88"/>
    <property type="match status" value="1"/>
</dbReference>
<dbReference type="Gene3D" id="1.10.533.10">
    <property type="entry name" value="Death Domain, Fas"/>
    <property type="match status" value="1"/>
</dbReference>
<dbReference type="Gene3D" id="3.40.50.10140">
    <property type="entry name" value="Toll/interleukin-1 receptor homology (TIR) domain"/>
    <property type="match status" value="1"/>
</dbReference>
<dbReference type="InterPro" id="IPR011029">
    <property type="entry name" value="DEATH-like_dom_sf"/>
</dbReference>
<dbReference type="InterPro" id="IPR000488">
    <property type="entry name" value="Death_dom"/>
</dbReference>
<dbReference type="InterPro" id="IPR034249">
    <property type="entry name" value="MyD88_Death"/>
</dbReference>
<dbReference type="InterPro" id="IPR017281">
    <property type="entry name" value="Myelin_different_resp_MyD88"/>
</dbReference>
<dbReference type="InterPro" id="IPR000157">
    <property type="entry name" value="TIR_dom"/>
</dbReference>
<dbReference type="InterPro" id="IPR035897">
    <property type="entry name" value="Toll_tir_struct_dom_sf"/>
</dbReference>
<dbReference type="PANTHER" id="PTHR15079">
    <property type="entry name" value="MYD88"/>
    <property type="match status" value="1"/>
</dbReference>
<dbReference type="PANTHER" id="PTHR15079:SF3">
    <property type="entry name" value="MYELOID DIFFERENTIATION PRIMARY RESPONSE PROTEIN MYD88"/>
    <property type="match status" value="1"/>
</dbReference>
<dbReference type="Pfam" id="PF00531">
    <property type="entry name" value="Death"/>
    <property type="match status" value="1"/>
</dbReference>
<dbReference type="Pfam" id="PF13676">
    <property type="entry name" value="TIR_2"/>
    <property type="match status" value="1"/>
</dbReference>
<dbReference type="PIRSF" id="PIRSF037756">
    <property type="entry name" value="MyD88"/>
    <property type="match status" value="1"/>
</dbReference>
<dbReference type="SMART" id="SM00005">
    <property type="entry name" value="DEATH"/>
    <property type="match status" value="1"/>
</dbReference>
<dbReference type="SMART" id="SM00255">
    <property type="entry name" value="TIR"/>
    <property type="match status" value="1"/>
</dbReference>
<dbReference type="SUPFAM" id="SSF47986">
    <property type="entry name" value="DEATH domain"/>
    <property type="match status" value="1"/>
</dbReference>
<dbReference type="SUPFAM" id="SSF52200">
    <property type="entry name" value="Toll/Interleukin receptor TIR domain"/>
    <property type="match status" value="1"/>
</dbReference>
<dbReference type="PROSITE" id="PS50017">
    <property type="entry name" value="DEATH_DOMAIN"/>
    <property type="match status" value="1"/>
</dbReference>
<dbReference type="PROSITE" id="PS50104">
    <property type="entry name" value="TIR"/>
    <property type="match status" value="1"/>
</dbReference>
<comment type="function">
    <text evidence="2 3 6 7">Adapter protein involved in the Toll-like receptor and IL-1 receptor signaling pathway in the innate immune response. Acts via IRAK1, IRAK2 and TRAF6, leading to NF-kappa-B activation, cytokine secretion and the inflammatory response. Increases IL-8 transcription. Involved in IL-18-mediated signaling pathway. Activates IRF1 resulting in its rapid migration into the nucleus to mediate an efficient induction of IFN-beta, NOS2/INOS, and IL12A genes (PubMed:17936907, PubMed:18760477). Upon TLR8 activation by GU-rich single-stranded RNA (GU-rich RNA) derived from viruses, induces IL1B release through NLRP3 inflammasome activation (By similarity). MyD88-mediated signaling in intestinal epithelial cells is crucial for maintenance of gut homeostasis and controls the expression of the antimicrobial lectin REG3G in the small intestine (By similarity).</text>
</comment>
<comment type="subunit">
    <text evidence="3">Homodimer. Also forms heterodimers with TIRAP. Binds to TLR2, TLR4, TLR5, IRAK1, IRAK2 and IRAK4 via their respective TIR domains. Interacts with IL18R1. Interacts with BMX, IL1RL1, IKBKE and IRF7. Interacts with LRRFIP1 and LRRFIP2; this interaction positively regulates Toll-like receptor (TLR) signaling in response to agonist. Interacts with FLII. LRRFIP1 and LRRFIP2 compete with FLII for MYD88-binding. Interacts with IRF1. Upon IL1B treatment, forms a complex with PELI1, IRAK1, IRAK4 and TRAF6; this complex recruits MAP3K7/TAK1, TAB1 and TAB2 to mediate NF-kappa-B activation. Direct binding of SMAD6 to PELI1 prevents the complex formation and hence negatively regulates IL1R-TLR signaling and eventually NF-kappa-B-mediated gene expression. May interact with PIK3AP1. Interacts (via TIR domain) with DHX9 (via H2A and OB-fold regions); this interaction is direct. Interacts with OTUD4 deubiquitinase; the interaction is direct.</text>
</comment>
<comment type="subcellular location">
    <subcellularLocation>
        <location evidence="3">Cytoplasm</location>
    </subcellularLocation>
    <subcellularLocation>
        <location evidence="3">Nucleus</location>
    </subcellularLocation>
</comment>
<comment type="alternative products">
    <event type="alternative splicing"/>
    <isoform>
        <id>Q599T9-1</id>
        <name>1</name>
        <sequence type="displayed"/>
    </isoform>
    <isoform>
        <id>Q599T9-2</id>
        <name>2</name>
        <sequence type="described" ref="VSP_038889"/>
    </isoform>
    <isoform>
        <id>Q599T9-3</id>
        <name>3</name>
        <sequence type="described" ref="VSP_038889 VSP_038890 VSP_038891"/>
    </isoform>
</comment>
<comment type="domain">
    <text evidence="2">The intermediate domain (ID) is required for the phosphorylation and activation of IRAK.</text>
</comment>
<comment type="PTM">
    <text evidence="3">Ubiquitinated; undergoes 'Lys-63'-linked polyubiquitination. OTUD4 specifically hydrolyzes 'Lys-63'-linked polyubiquitinated MYD88. Deubiquitinated by USP3 that cleaves 'Lys-63'-linked ubiquitin chains leading to inhibition of MYD88-induced NF-kappa-B signaling.</text>
</comment>
<gene>
    <name type="primary">MYD88</name>
</gene>
<evidence type="ECO:0000250" key="1"/>
<evidence type="ECO:0000250" key="2">
    <source>
        <dbReference type="UniProtKB" id="P22366"/>
    </source>
</evidence>
<evidence type="ECO:0000250" key="3">
    <source>
        <dbReference type="UniProtKB" id="Q99836"/>
    </source>
</evidence>
<evidence type="ECO:0000255" key="4">
    <source>
        <dbReference type="PROSITE-ProRule" id="PRU00064"/>
    </source>
</evidence>
<evidence type="ECO:0000255" key="5">
    <source>
        <dbReference type="PROSITE-ProRule" id="PRU00204"/>
    </source>
</evidence>
<evidence type="ECO:0000269" key="6">
    <source>
    </source>
</evidence>
<evidence type="ECO:0000269" key="7">
    <source>
    </source>
</evidence>
<evidence type="ECO:0000303" key="8">
    <source ref="2"/>
</evidence>
<name>MYD88_BOVIN</name>
<protein>
    <recommendedName>
        <fullName>Myeloid differentiation primary response protein MyD88</fullName>
    </recommendedName>
</protein>